<gene>
    <name evidence="1" type="primary">murB</name>
    <name type="ordered locus">SaurJH9_0762</name>
</gene>
<proteinExistence type="inferred from homology"/>
<feature type="chain" id="PRO_1000074528" description="UDP-N-acetylenolpyruvoylglucosamine reductase">
    <location>
        <begin position="1"/>
        <end position="307"/>
    </location>
</feature>
<feature type="domain" description="FAD-binding PCMH-type" evidence="1">
    <location>
        <begin position="33"/>
        <end position="197"/>
    </location>
</feature>
<feature type="active site" evidence="1">
    <location>
        <position position="176"/>
    </location>
</feature>
<feature type="active site" description="Proton donor" evidence="1">
    <location>
        <position position="226"/>
    </location>
</feature>
<feature type="active site" evidence="1">
    <location>
        <position position="296"/>
    </location>
</feature>
<keyword id="KW-0131">Cell cycle</keyword>
<keyword id="KW-0132">Cell division</keyword>
<keyword id="KW-0133">Cell shape</keyword>
<keyword id="KW-0961">Cell wall biogenesis/degradation</keyword>
<keyword id="KW-0963">Cytoplasm</keyword>
<keyword id="KW-0274">FAD</keyword>
<keyword id="KW-0285">Flavoprotein</keyword>
<keyword id="KW-0521">NADP</keyword>
<keyword id="KW-0560">Oxidoreductase</keyword>
<keyword id="KW-0573">Peptidoglycan synthesis</keyword>
<comment type="function">
    <text evidence="1">Cell wall formation.</text>
</comment>
<comment type="catalytic activity">
    <reaction evidence="1">
        <text>UDP-N-acetyl-alpha-D-muramate + NADP(+) = UDP-N-acetyl-3-O-(1-carboxyvinyl)-alpha-D-glucosamine + NADPH + H(+)</text>
        <dbReference type="Rhea" id="RHEA:12248"/>
        <dbReference type="ChEBI" id="CHEBI:15378"/>
        <dbReference type="ChEBI" id="CHEBI:57783"/>
        <dbReference type="ChEBI" id="CHEBI:58349"/>
        <dbReference type="ChEBI" id="CHEBI:68483"/>
        <dbReference type="ChEBI" id="CHEBI:70757"/>
        <dbReference type="EC" id="1.3.1.98"/>
    </reaction>
</comment>
<comment type="cofactor">
    <cofactor evidence="1">
        <name>FAD</name>
        <dbReference type="ChEBI" id="CHEBI:57692"/>
    </cofactor>
</comment>
<comment type="pathway">
    <text evidence="1">Cell wall biogenesis; peptidoglycan biosynthesis.</text>
</comment>
<comment type="subcellular location">
    <subcellularLocation>
        <location evidence="1">Cytoplasm</location>
    </subcellularLocation>
</comment>
<comment type="similarity">
    <text evidence="1">Belongs to the MurB family.</text>
</comment>
<dbReference type="EC" id="1.3.1.98" evidence="1"/>
<dbReference type="EMBL" id="CP000703">
    <property type="protein sequence ID" value="ABQ48565.1"/>
    <property type="molecule type" value="Genomic_DNA"/>
</dbReference>
<dbReference type="RefSeq" id="WP_000608433.1">
    <property type="nucleotide sequence ID" value="NC_009487.1"/>
</dbReference>
<dbReference type="SMR" id="A5IQU2"/>
<dbReference type="KEGG" id="saj:SaurJH9_0762"/>
<dbReference type="HOGENOM" id="CLU_035304_1_1_9"/>
<dbReference type="UniPathway" id="UPA00219"/>
<dbReference type="GO" id="GO:0005829">
    <property type="term" value="C:cytosol"/>
    <property type="evidence" value="ECO:0007669"/>
    <property type="project" value="TreeGrafter"/>
</dbReference>
<dbReference type="GO" id="GO:0071949">
    <property type="term" value="F:FAD binding"/>
    <property type="evidence" value="ECO:0007669"/>
    <property type="project" value="InterPro"/>
</dbReference>
<dbReference type="GO" id="GO:0008762">
    <property type="term" value="F:UDP-N-acetylmuramate dehydrogenase activity"/>
    <property type="evidence" value="ECO:0007669"/>
    <property type="project" value="UniProtKB-UniRule"/>
</dbReference>
<dbReference type="GO" id="GO:0051301">
    <property type="term" value="P:cell division"/>
    <property type="evidence" value="ECO:0007669"/>
    <property type="project" value="UniProtKB-KW"/>
</dbReference>
<dbReference type="GO" id="GO:0071555">
    <property type="term" value="P:cell wall organization"/>
    <property type="evidence" value="ECO:0007669"/>
    <property type="project" value="UniProtKB-KW"/>
</dbReference>
<dbReference type="GO" id="GO:0009252">
    <property type="term" value="P:peptidoglycan biosynthetic process"/>
    <property type="evidence" value="ECO:0007669"/>
    <property type="project" value="UniProtKB-UniRule"/>
</dbReference>
<dbReference type="GO" id="GO:0008360">
    <property type="term" value="P:regulation of cell shape"/>
    <property type="evidence" value="ECO:0007669"/>
    <property type="project" value="UniProtKB-KW"/>
</dbReference>
<dbReference type="FunFam" id="3.90.78.10:FF:000001">
    <property type="entry name" value="UDP-N-acetylenolpyruvoylglucosamine reductase"/>
    <property type="match status" value="1"/>
</dbReference>
<dbReference type="Gene3D" id="3.30.465.10">
    <property type="match status" value="1"/>
</dbReference>
<dbReference type="Gene3D" id="3.90.78.10">
    <property type="entry name" value="UDP-N-acetylenolpyruvoylglucosamine reductase, C-terminal domain"/>
    <property type="match status" value="1"/>
</dbReference>
<dbReference type="Gene3D" id="3.30.43.10">
    <property type="entry name" value="Uridine Diphospho-n-acetylenolpyruvylglucosamine Reductase, domain 2"/>
    <property type="match status" value="1"/>
</dbReference>
<dbReference type="HAMAP" id="MF_00037">
    <property type="entry name" value="MurB"/>
    <property type="match status" value="1"/>
</dbReference>
<dbReference type="InterPro" id="IPR016166">
    <property type="entry name" value="FAD-bd_PCMH"/>
</dbReference>
<dbReference type="InterPro" id="IPR036318">
    <property type="entry name" value="FAD-bd_PCMH-like_sf"/>
</dbReference>
<dbReference type="InterPro" id="IPR016167">
    <property type="entry name" value="FAD-bd_PCMH_sub1"/>
</dbReference>
<dbReference type="InterPro" id="IPR016169">
    <property type="entry name" value="FAD-bd_PCMH_sub2"/>
</dbReference>
<dbReference type="InterPro" id="IPR003170">
    <property type="entry name" value="MurB"/>
</dbReference>
<dbReference type="InterPro" id="IPR011601">
    <property type="entry name" value="MurB_C"/>
</dbReference>
<dbReference type="InterPro" id="IPR036635">
    <property type="entry name" value="MurB_C_sf"/>
</dbReference>
<dbReference type="InterPro" id="IPR006094">
    <property type="entry name" value="Oxid_FAD_bind_N"/>
</dbReference>
<dbReference type="NCBIfam" id="TIGR00179">
    <property type="entry name" value="murB"/>
    <property type="match status" value="1"/>
</dbReference>
<dbReference type="NCBIfam" id="NF010480">
    <property type="entry name" value="PRK13905.1"/>
    <property type="match status" value="1"/>
</dbReference>
<dbReference type="PANTHER" id="PTHR21071">
    <property type="entry name" value="UDP-N-ACETYLENOLPYRUVOYLGLUCOSAMINE REDUCTASE"/>
    <property type="match status" value="1"/>
</dbReference>
<dbReference type="PANTHER" id="PTHR21071:SF4">
    <property type="entry name" value="UDP-N-ACETYLENOLPYRUVOYLGLUCOSAMINE REDUCTASE"/>
    <property type="match status" value="1"/>
</dbReference>
<dbReference type="Pfam" id="PF01565">
    <property type="entry name" value="FAD_binding_4"/>
    <property type="match status" value="1"/>
</dbReference>
<dbReference type="Pfam" id="PF02873">
    <property type="entry name" value="MurB_C"/>
    <property type="match status" value="1"/>
</dbReference>
<dbReference type="SUPFAM" id="SSF56176">
    <property type="entry name" value="FAD-binding/transporter-associated domain-like"/>
    <property type="match status" value="1"/>
</dbReference>
<dbReference type="SUPFAM" id="SSF56194">
    <property type="entry name" value="Uridine diphospho-N-Acetylenolpyruvylglucosamine reductase, MurB, C-terminal domain"/>
    <property type="match status" value="1"/>
</dbReference>
<dbReference type="PROSITE" id="PS51387">
    <property type="entry name" value="FAD_PCMH"/>
    <property type="match status" value="1"/>
</dbReference>
<sequence length="307" mass="33783">MINKDIYQALQQLIPNEKIKVDEPLKRYTYTKTGGNADFYITPTKNEEVQAVVKYAYQNEIPVTYLGNGSNIIIREGGIRGIVISLLSLDHIDVSDDAIIAGSGAAIIDVSRVARDYALTGLEFACGIPGSIGGAVYMNAGAYGGEVKDCIDYALCVNEQGSLIKLTTKELELDYRNSIIQKEHLVVLEAAFTLAPGKMTEIQAKMDDLTERRESKQPLEYPSCGSVFQRPPGHFAGKLIQDSNLQGHRIGGVEVSTKHAGFMVNVDNGTATDYENLIHYVQKTVKEKFGIELNREVRIIGEHPKES</sequence>
<evidence type="ECO:0000255" key="1">
    <source>
        <dbReference type="HAMAP-Rule" id="MF_00037"/>
    </source>
</evidence>
<protein>
    <recommendedName>
        <fullName evidence="1">UDP-N-acetylenolpyruvoylglucosamine reductase</fullName>
        <ecNumber evidence="1">1.3.1.98</ecNumber>
    </recommendedName>
    <alternativeName>
        <fullName evidence="1">UDP-N-acetylmuramate dehydrogenase</fullName>
    </alternativeName>
</protein>
<organism>
    <name type="scientific">Staphylococcus aureus (strain JH9)</name>
    <dbReference type="NCBI Taxonomy" id="359786"/>
    <lineage>
        <taxon>Bacteria</taxon>
        <taxon>Bacillati</taxon>
        <taxon>Bacillota</taxon>
        <taxon>Bacilli</taxon>
        <taxon>Bacillales</taxon>
        <taxon>Staphylococcaceae</taxon>
        <taxon>Staphylococcus</taxon>
    </lineage>
</organism>
<reference key="1">
    <citation type="submission" date="2007-05" db="EMBL/GenBank/DDBJ databases">
        <title>Complete sequence of chromosome of Staphylococcus aureus subsp. aureus JH9.</title>
        <authorList>
            <consortium name="US DOE Joint Genome Institute"/>
            <person name="Copeland A."/>
            <person name="Lucas S."/>
            <person name="Lapidus A."/>
            <person name="Barry K."/>
            <person name="Detter J.C."/>
            <person name="Glavina del Rio T."/>
            <person name="Hammon N."/>
            <person name="Israni S."/>
            <person name="Pitluck S."/>
            <person name="Chain P."/>
            <person name="Malfatti S."/>
            <person name="Shin M."/>
            <person name="Vergez L."/>
            <person name="Schmutz J."/>
            <person name="Larimer F."/>
            <person name="Land M."/>
            <person name="Hauser L."/>
            <person name="Kyrpides N."/>
            <person name="Kim E."/>
            <person name="Tomasz A."/>
            <person name="Richardson P."/>
        </authorList>
    </citation>
    <scope>NUCLEOTIDE SEQUENCE [LARGE SCALE GENOMIC DNA]</scope>
    <source>
        <strain>JH9</strain>
    </source>
</reference>
<name>MURB_STAA9</name>
<accession>A5IQU2</accession>